<gene>
    <name type="primary">SIFV0051</name>
</gene>
<reference key="1">
    <citation type="journal article" date="2000" name="Virology">
        <title>A novel lipothrixvirus, SIFV, of the extremely thermophilic crenarchaeon Sulfolobus.</title>
        <authorList>
            <person name="Arnold H.P."/>
            <person name="Zillig W."/>
            <person name="Ziese U."/>
            <person name="Holz I."/>
            <person name="Crosby M."/>
            <person name="Utterback T."/>
            <person name="Weidmann J.F."/>
            <person name="Umayam L.A."/>
            <person name="Teffera K."/>
            <person name="Kristjanson J.K."/>
            <person name="Klenk H.P."/>
            <person name="Nelson K.E."/>
            <person name="Fraser C.M."/>
        </authorList>
    </citation>
    <scope>NUCLEOTIDE SEQUENCE [GENOMIC DNA]</scope>
</reference>
<keyword id="KW-1043">Host membrane</keyword>
<keyword id="KW-0472">Membrane</keyword>
<keyword id="KW-1185">Reference proteome</keyword>
<keyword id="KW-0812">Transmembrane</keyword>
<keyword id="KW-1133">Transmembrane helix</keyword>
<organismHost>
    <name type="scientific">Saccharolobus islandicus</name>
    <name type="common">Sulfolobus islandicus</name>
    <dbReference type="NCBI Taxonomy" id="43080"/>
</organismHost>
<comment type="subcellular location">
    <subcellularLocation>
        <location evidence="2">Host membrane</location>
        <topology evidence="2">Single-pass membrane protein</topology>
    </subcellularLocation>
</comment>
<evidence type="ECO:0000255" key="1"/>
<evidence type="ECO:0000305" key="2"/>
<protein>
    <recommendedName>
        <fullName>Uncharacterized protein 51</fullName>
    </recommendedName>
</protein>
<dbReference type="EMBL" id="AF440571">
    <property type="protein sequence ID" value="AAL27760.1"/>
    <property type="molecule type" value="Genomic_DNA"/>
</dbReference>
<dbReference type="RefSeq" id="NP_445714.1">
    <property type="nucleotide sequence ID" value="NC_003214.2"/>
</dbReference>
<dbReference type="GeneID" id="922317"/>
<dbReference type="KEGG" id="vg:922317"/>
<dbReference type="Proteomes" id="UP000007017">
    <property type="component" value="Segment"/>
</dbReference>
<dbReference type="GO" id="GO:0033644">
    <property type="term" value="C:host cell membrane"/>
    <property type="evidence" value="ECO:0007669"/>
    <property type="project" value="UniProtKB-SubCell"/>
</dbReference>
<dbReference type="GO" id="GO:0016020">
    <property type="term" value="C:membrane"/>
    <property type="evidence" value="ECO:0007669"/>
    <property type="project" value="UniProtKB-KW"/>
</dbReference>
<proteinExistence type="predicted"/>
<name>Y051_SIFVH</name>
<organism>
    <name type="scientific">Sulfolobus islandicus filamentous virus (isolate Iceland/Hveragerdi)</name>
    <name type="common">SIFV</name>
    <dbReference type="NCBI Taxonomy" id="654908"/>
    <lineage>
        <taxon>Viruses</taxon>
        <taxon>Adnaviria</taxon>
        <taxon>Zilligvirae</taxon>
        <taxon>Taleaviricota</taxon>
        <taxon>Tokiviricetes</taxon>
        <taxon>Ligamenvirales</taxon>
        <taxon>Lipothrixviridae</taxon>
        <taxon>Betalipothrixvirus</taxon>
        <taxon>Sulfolobus islandicus filamentous virus</taxon>
    </lineage>
</organism>
<feature type="chain" id="PRO_0000385443" description="Uncharacterized protein 51">
    <location>
        <begin position="1"/>
        <end position="232"/>
    </location>
</feature>
<feature type="transmembrane region" description="Helical" evidence="1">
    <location>
        <begin position="209"/>
        <end position="229"/>
    </location>
</feature>
<accession>Q914I1</accession>
<sequence>MSYTTPTYTASVSNDILRYMMAYATGNDGCIQSMSALFQSSGESIIAYNVSASSTTQAGFFFQLQNVPQGIGVQIVFFSTTIPQNTFFIDLRFTTTQGNTYQLAQVNTLPPNTNYALVIIVSLTITVQPASNVNISPLLQAFTSFASNQCATAQPPSLSYTGNGFTVFYENTYTSGITFNAILIAQNTLTSSNTIQITATINGNVVATATISTPALGYAYFLFTLTLVFTSE</sequence>